<comment type="function">
    <text evidence="1">Together with LptE, is involved in the assembly of lipopolysaccharide (LPS) at the surface of the outer membrane.</text>
</comment>
<comment type="subunit">
    <text evidence="1">Component of the lipopolysaccharide transport and assembly complex. Interacts with LptE and LptA.</text>
</comment>
<comment type="subcellular location">
    <subcellularLocation>
        <location evidence="1">Cell outer membrane</location>
    </subcellularLocation>
</comment>
<comment type="similarity">
    <text evidence="1">Belongs to the LptD family.</text>
</comment>
<reference key="1">
    <citation type="journal article" date="2003" name="Genome Res.">
        <title>Comparative genome analysis of Vibrio vulnificus, a marine pathogen.</title>
        <authorList>
            <person name="Chen C.-Y."/>
            <person name="Wu K.-M."/>
            <person name="Chang Y.-C."/>
            <person name="Chang C.-H."/>
            <person name="Tsai H.-C."/>
            <person name="Liao T.-L."/>
            <person name="Liu Y.-M."/>
            <person name="Chen H.-J."/>
            <person name="Shen A.B.-T."/>
            <person name="Li J.-C."/>
            <person name="Su T.-L."/>
            <person name="Shao C.-P."/>
            <person name="Lee C.-T."/>
            <person name="Hor L.-I."/>
            <person name="Tsai S.-F."/>
        </authorList>
    </citation>
    <scope>NUCLEOTIDE SEQUENCE [LARGE SCALE GENOMIC DNA]</scope>
    <source>
        <strain>YJ016</strain>
    </source>
</reference>
<feature type="signal peptide" evidence="1">
    <location>
        <begin position="1"/>
        <end position="24"/>
    </location>
</feature>
<feature type="chain" id="PRO_0000020295" description="LPS-assembly protein LptD">
    <location>
        <begin position="25"/>
        <end position="776"/>
    </location>
</feature>
<proteinExistence type="inferred from homology"/>
<evidence type="ECO:0000255" key="1">
    <source>
        <dbReference type="HAMAP-Rule" id="MF_01411"/>
    </source>
</evidence>
<sequence length="776" mass="88857">MQHFSRTFLAASIATALFAPYAQAEAILNNSVQEMPTTDQCLVDAEKNDANAEIVIQADNLQAINGDKAIYSGDVEVTQGNKKITAESVTLHQQENIVVAEGNVTFNDGEVKASSSKVTNNMTSETFSLENTEYQFLCQQGRGQAAYIAKTGQAVYELEDGSITSCPADDNAWRLVASSIEVDQDEETATFYHPRFEVLDVPVFYAPYLTLPIGNTRKTGFLFPSVNYGSSDGLEIEVPFYWNIAPNYDLTLTTLYMQQRGVKQDADFRYLSDGWGSGELKGEYLPGDEKYNDEDRWGYQYKHDGIINKQWLVSLDYSQVSDIDYFRDLSSDLGNREDGQLMQQGKVAYRSDFWDMSLQVRDFQILLQDNNQPYRLLPQVKFNFYTPLLGNYLNFDVKSELTQFDIQDASKPNALRAHVEPGLTIPLSTSWATWTTEARLLATYYQQDLDRLTDPTLKSQLDETVARVIPEYRSHARIYLEREAKLFEGYTQSLEPQIQYLYVPEEEQGNIYNYDTTLLQTDYYGLFRSRKYSSIDKIAAANQLSYGASTRFFDDEYKERLNISFGQIYYIDKKTKLTGNQEETSNYSSWAVETDFNYEDFLFYHGGIQYDIDLNAMQLANSTLEYQFTDGFIQGNYRYVTKDYIEDTISFDELDKITRKGISQAGIVGAYNINRHWSASGQYYYDLTEEIDLEWMASLRYQSDCWYIGFTYTNQLVKWRNDVVGGDSNNPVYDTNISVNFGIQGFATKNKAETAAKELDSTDNAITYGRPFYLNN</sequence>
<accession>Q7MP83</accession>
<organism>
    <name type="scientific">Vibrio vulnificus (strain YJ016)</name>
    <dbReference type="NCBI Taxonomy" id="196600"/>
    <lineage>
        <taxon>Bacteria</taxon>
        <taxon>Pseudomonadati</taxon>
        <taxon>Pseudomonadota</taxon>
        <taxon>Gammaproteobacteria</taxon>
        <taxon>Vibrionales</taxon>
        <taxon>Vibrionaceae</taxon>
        <taxon>Vibrio</taxon>
    </lineage>
</organism>
<name>LPTD_VIBVY</name>
<protein>
    <recommendedName>
        <fullName evidence="1">LPS-assembly protein LptD</fullName>
    </recommendedName>
</protein>
<dbReference type="EMBL" id="BA000037">
    <property type="protein sequence ID" value="BAC93245.1"/>
    <property type="molecule type" value="Genomic_DNA"/>
</dbReference>
<dbReference type="RefSeq" id="WP_011149399.1">
    <property type="nucleotide sequence ID" value="NC_005139.1"/>
</dbReference>
<dbReference type="SMR" id="Q7MP83"/>
<dbReference type="STRING" id="672.VV93_v1c04480"/>
<dbReference type="KEGG" id="vvy:VV0481"/>
<dbReference type="PATRIC" id="fig|196600.6.peg.507"/>
<dbReference type="eggNOG" id="COG1452">
    <property type="taxonomic scope" value="Bacteria"/>
</dbReference>
<dbReference type="HOGENOM" id="CLU_009039_2_0_6"/>
<dbReference type="Proteomes" id="UP000002675">
    <property type="component" value="Chromosome I"/>
</dbReference>
<dbReference type="GO" id="GO:0009279">
    <property type="term" value="C:cell outer membrane"/>
    <property type="evidence" value="ECO:0007669"/>
    <property type="project" value="UniProtKB-SubCell"/>
</dbReference>
<dbReference type="GO" id="GO:1990351">
    <property type="term" value="C:transporter complex"/>
    <property type="evidence" value="ECO:0007669"/>
    <property type="project" value="TreeGrafter"/>
</dbReference>
<dbReference type="GO" id="GO:0043165">
    <property type="term" value="P:Gram-negative-bacterium-type cell outer membrane assembly"/>
    <property type="evidence" value="ECO:0007669"/>
    <property type="project" value="UniProtKB-UniRule"/>
</dbReference>
<dbReference type="GO" id="GO:0015920">
    <property type="term" value="P:lipopolysaccharide transport"/>
    <property type="evidence" value="ECO:0007669"/>
    <property type="project" value="InterPro"/>
</dbReference>
<dbReference type="Gene3D" id="2.60.450.10">
    <property type="entry name" value="Lipopolysaccharide (LPS) transport protein A like domain"/>
    <property type="match status" value="1"/>
</dbReference>
<dbReference type="HAMAP" id="MF_01411">
    <property type="entry name" value="LPS_assembly_LptD"/>
    <property type="match status" value="1"/>
</dbReference>
<dbReference type="InterPro" id="IPR020889">
    <property type="entry name" value="LipoPS_assembly_LptD"/>
</dbReference>
<dbReference type="InterPro" id="IPR050218">
    <property type="entry name" value="LptD"/>
</dbReference>
<dbReference type="InterPro" id="IPR007543">
    <property type="entry name" value="LptD_C"/>
</dbReference>
<dbReference type="InterPro" id="IPR005653">
    <property type="entry name" value="OstA-like_N"/>
</dbReference>
<dbReference type="NCBIfam" id="NF002997">
    <property type="entry name" value="PRK03761.1"/>
    <property type="match status" value="1"/>
</dbReference>
<dbReference type="PANTHER" id="PTHR30189">
    <property type="entry name" value="LPS-ASSEMBLY PROTEIN"/>
    <property type="match status" value="1"/>
</dbReference>
<dbReference type="PANTHER" id="PTHR30189:SF1">
    <property type="entry name" value="LPS-ASSEMBLY PROTEIN LPTD"/>
    <property type="match status" value="1"/>
</dbReference>
<dbReference type="Pfam" id="PF04453">
    <property type="entry name" value="LptD"/>
    <property type="match status" value="1"/>
</dbReference>
<dbReference type="Pfam" id="PF03968">
    <property type="entry name" value="LptD_N"/>
    <property type="match status" value="1"/>
</dbReference>
<keyword id="KW-0998">Cell outer membrane</keyword>
<keyword id="KW-0472">Membrane</keyword>
<keyword id="KW-0732">Signal</keyword>
<gene>
    <name evidence="1" type="primary">lptD</name>
    <name type="synonym">imp</name>
    <name type="synonym">ostA</name>
    <name type="ordered locus">VV0481</name>
</gene>